<protein>
    <recommendedName>
        <fullName>Frizzled-5</fullName>
        <shortName>Fz-5</shortName>
    </recommendedName>
</protein>
<proteinExistence type="evidence at transcript level"/>
<sequence length="592" mass="66490">MRKPADEHHFTMETSGMHLVGFWLHVLLLFQLSGLGDSASKDIVCEPITVPMCKGIGYNHTYMPNQFNHDNQDEVGLEVHQFWPLVRIHCSPDLLFFLCSMYTPICLQDYKKPLPPCRSVCERAKRGCSPLMIQYGFEWPERMSCEQLPMLGDTDRLCMDRNSSETTTLSPPFPKPTPKGTPRHRATAKSAPPQKCDRECHCRGPLVPIKKEAHPLHNRVNTGSLPNCALPCHQPYFSQDERTFTTFWIGLWSVLCFVSTFTTVATFLIDMERFKYPERPIIFLAACYLFVSLGYIVRLLAGHERVACEGTGDQQHILYDTTGPALCTLVFLLIYFFGMASSIWWVVLSFTWFLAAGMKWGNEAIAGYSQYFHLAAWLVPSVKSIAVLALSSVDGDPVAGICYVGNQSLEGLRGFVLAPLVVYLFTGSLFLLAGFVSLFRIRSVIKQGGTKTDKLEKLMIRIGLFTVLYTVPATIVVACLVYEQHYRPSWERALACSCPSERQRLGMGPDYAVFMLKYFMCLVVGITSGVWIWSGKTLESWRRFIARYVPCRTRKPPVSASSMYSEASTALTARAGTAPTGTYHKSAPSSHV</sequence>
<organism>
    <name type="scientific">Danio rerio</name>
    <name type="common">Zebrafish</name>
    <name type="synonym">Brachydanio rerio</name>
    <dbReference type="NCBI Taxonomy" id="7955"/>
    <lineage>
        <taxon>Eukaryota</taxon>
        <taxon>Metazoa</taxon>
        <taxon>Chordata</taxon>
        <taxon>Craniata</taxon>
        <taxon>Vertebrata</taxon>
        <taxon>Euteleostomi</taxon>
        <taxon>Actinopterygii</taxon>
        <taxon>Neopterygii</taxon>
        <taxon>Teleostei</taxon>
        <taxon>Ostariophysi</taxon>
        <taxon>Cypriniformes</taxon>
        <taxon>Danionidae</taxon>
        <taxon>Danioninae</taxon>
        <taxon>Danio</taxon>
    </lineage>
</organism>
<evidence type="ECO:0000250" key="1">
    <source>
        <dbReference type="UniProtKB" id="Q8CHL0"/>
    </source>
</evidence>
<evidence type="ECO:0000250" key="2">
    <source>
        <dbReference type="UniProtKB" id="Q9EQD0"/>
    </source>
</evidence>
<evidence type="ECO:0000255" key="3"/>
<evidence type="ECO:0000255" key="4">
    <source>
        <dbReference type="PROSITE-ProRule" id="PRU00090"/>
    </source>
</evidence>
<evidence type="ECO:0000256" key="5">
    <source>
        <dbReference type="SAM" id="MobiDB-lite"/>
    </source>
</evidence>
<evidence type="ECO:0000269" key="6">
    <source>
    </source>
</evidence>
<evidence type="ECO:0000269" key="7">
    <source>
    </source>
</evidence>
<evidence type="ECO:0000269" key="8">
    <source>
    </source>
</evidence>
<evidence type="ECO:0000305" key="9"/>
<comment type="function">
    <text evidence="1 2 6 9">Receptor for Wnt proteins (By similarity). Following binding, activates the canonical Wnt/beta-catenin signaling pathway (By similarity). Also activates wnt non-canonical signaling (PubMed:15996547). In neurons, activation of the Wnt pathway promotes formation of synapses (By similarity). May be involved in transduction and intercellular transmission of polarity information during tissue morphogenesis and/or in differentiated tissues (Probable). Plays a role in early eye development, possibly through wnt non-canonical signaling (PubMed:15996547). As a receptor for wnt11, promotes eye formation, at least partially, by antagonizing the Wnt/beta-catenin pathway (PubMed:15996547). In addition, promotes coherence of eye field cells, potentially contributing to the coordinated morphogenetic behaviors of cells in the nascent eye field (PubMed:15996547).</text>
</comment>
<comment type="subcellular location">
    <subcellularLocation>
        <location evidence="2">Cell membrane</location>
        <topology evidence="2">Multi-pass membrane protein</topology>
    </subcellularLocation>
    <subcellularLocation>
        <location evidence="2">Golgi apparatus membrane</location>
        <topology evidence="2">Multi-pass membrane protein</topology>
    </subcellularLocation>
    <subcellularLocation>
        <location evidence="2">Synapse</location>
    </subcellularLocation>
    <subcellularLocation>
        <location evidence="1">Perikaryon</location>
    </subcellularLocation>
    <subcellularLocation>
        <location evidence="1">Cell projection</location>
        <location evidence="1">Dendrite</location>
    </subcellularLocation>
    <subcellularLocation>
        <location evidence="1">Cell projection</location>
        <location evidence="1">Axon</location>
    </subcellularLocation>
    <text evidence="2">Localized at the plasma membrane and also found at the Golgi apparatus.</text>
</comment>
<comment type="developmental stage">
    <text evidence="6 8">During late gastrulation stages, exclusively expressed in the eye field within the anterior neural plate (PubMed:15996547). Expressed in the developing liver, at least from 72 hpf to 5 dpf (PubMed:29266316).</text>
</comment>
<comment type="disruption phenotype">
    <text evidence="6 7">During gastrulation, morphants display a reduction in the eye field within the anterior neural plate (ANP), while other ANP regions are essentially normal (PubMed:15996547). Later on, at 3 dpf, they exhibit coloboma and microphthalmia phenotypes (PubMed:26908622).</text>
</comment>
<comment type="similarity">
    <text evidence="9">Belongs to the G-protein coupled receptor Fz/Smo family.</text>
</comment>
<feature type="signal peptide" evidence="3">
    <location>
        <begin position="1"/>
        <end position="38"/>
    </location>
</feature>
<feature type="chain" id="PRO_5035035770" description="Frizzled-5" evidence="3">
    <location>
        <begin position="39"/>
        <end position="592"/>
    </location>
</feature>
<feature type="topological domain" description="Extracellular" evidence="9">
    <location>
        <begin position="39"/>
        <end position="248"/>
    </location>
</feature>
<feature type="transmembrane region" description="Helical" evidence="3">
    <location>
        <begin position="249"/>
        <end position="269"/>
    </location>
</feature>
<feature type="topological domain" description="Cytoplasmic" evidence="9">
    <location>
        <begin position="270"/>
        <end position="280"/>
    </location>
</feature>
<feature type="transmembrane region" description="Helical" evidence="3">
    <location>
        <begin position="281"/>
        <end position="301"/>
    </location>
</feature>
<feature type="topological domain" description="Extracellular" evidence="9">
    <location>
        <begin position="302"/>
        <end position="327"/>
    </location>
</feature>
<feature type="transmembrane region" description="Helical" evidence="3">
    <location>
        <begin position="328"/>
        <end position="348"/>
    </location>
</feature>
<feature type="topological domain" description="Cytoplasmic" evidence="9">
    <location>
        <begin position="349"/>
        <end position="370"/>
    </location>
</feature>
<feature type="transmembrane region" description="Helical" evidence="3">
    <location>
        <begin position="371"/>
        <end position="391"/>
    </location>
</feature>
<feature type="topological domain" description="Extracellular" evidence="9">
    <location>
        <begin position="392"/>
        <end position="414"/>
    </location>
</feature>
<feature type="transmembrane region" description="Helical" evidence="3">
    <location>
        <begin position="415"/>
        <end position="435"/>
    </location>
</feature>
<feature type="topological domain" description="Cytoplasmic" evidence="9">
    <location>
        <begin position="436"/>
        <end position="461"/>
    </location>
</feature>
<feature type="transmembrane region" description="Helical" evidence="3">
    <location>
        <begin position="462"/>
        <end position="482"/>
    </location>
</feature>
<feature type="topological domain" description="Extracellular" evidence="9">
    <location>
        <begin position="483"/>
        <end position="512"/>
    </location>
</feature>
<feature type="transmembrane region" description="Helical" evidence="3">
    <location>
        <begin position="513"/>
        <end position="533"/>
    </location>
</feature>
<feature type="topological domain" description="Cytoplasmic" evidence="9">
    <location>
        <begin position="534"/>
        <end position="592"/>
    </location>
</feature>
<feature type="domain" description="FZ" evidence="4">
    <location>
        <begin position="40"/>
        <end position="161"/>
    </location>
</feature>
<feature type="region of interest" description="Disordered" evidence="5">
    <location>
        <begin position="162"/>
        <end position="192"/>
    </location>
</feature>
<feature type="disulfide bond" evidence="4">
    <location>
        <begin position="45"/>
        <end position="106"/>
    </location>
</feature>
<feature type="disulfide bond" evidence="4">
    <location>
        <begin position="53"/>
        <end position="99"/>
    </location>
</feature>
<feature type="disulfide bond" evidence="4">
    <location>
        <begin position="90"/>
        <end position="128"/>
    </location>
</feature>
<feature type="disulfide bond" evidence="4">
    <location>
        <begin position="117"/>
        <end position="158"/>
    </location>
</feature>
<feature type="disulfide bond" evidence="4">
    <location>
        <begin position="121"/>
        <end position="145"/>
    </location>
</feature>
<dbReference type="EMBL" id="FQ377896">
    <property type="status" value="NOT_ANNOTATED_CDS"/>
    <property type="molecule type" value="Genomic_DNA"/>
</dbReference>
<dbReference type="EMBL" id="BC163118">
    <property type="protein sequence ID" value="AAI63118.1"/>
    <property type="molecule type" value="mRNA"/>
</dbReference>
<dbReference type="EMBL" id="BC163120">
    <property type="protein sequence ID" value="AAI63120.1"/>
    <property type="molecule type" value="mRNA"/>
</dbReference>
<dbReference type="RefSeq" id="NP_571209.2">
    <property type="nucleotide sequence ID" value="NM_131134.2"/>
</dbReference>
<dbReference type="SMR" id="B3DIG4"/>
<dbReference type="FunCoup" id="B3DIG4">
    <property type="interactions" value="579"/>
</dbReference>
<dbReference type="STRING" id="7955.ENSDARP00000036600"/>
<dbReference type="PaxDb" id="7955-ENSDARP00000036600"/>
<dbReference type="GeneID" id="30364"/>
<dbReference type="KEGG" id="dre:30364"/>
<dbReference type="AGR" id="ZFIN:ZDB-GENE-990415-218"/>
<dbReference type="CTD" id="7855"/>
<dbReference type="ZFIN" id="ZDB-GENE-990415-218">
    <property type="gene designation" value="fzd5"/>
</dbReference>
<dbReference type="eggNOG" id="KOG3577">
    <property type="taxonomic scope" value="Eukaryota"/>
</dbReference>
<dbReference type="HOGENOM" id="CLU_007873_2_0_1"/>
<dbReference type="OMA" id="QLNCAQP"/>
<dbReference type="OrthoDB" id="10053709at2759"/>
<dbReference type="TreeFam" id="TF317907"/>
<dbReference type="Reactome" id="R-DRE-4608870">
    <property type="pathway name" value="Asymmetric localization of PCP proteins"/>
</dbReference>
<dbReference type="Reactome" id="R-DRE-4641262">
    <property type="pathway name" value="Disassembly of the destruction complex and recruitment of AXIN to the membrane"/>
</dbReference>
<dbReference type="Reactome" id="R-DRE-4641263">
    <property type="pathway name" value="Regulation of FZD by ubiquitination"/>
</dbReference>
<dbReference type="Reactome" id="R-DRE-5140745">
    <property type="pathway name" value="WNT5A-dependent internalization of FZD2, FZD5 and ROR2"/>
</dbReference>
<dbReference type="Proteomes" id="UP000000437">
    <property type="component" value="Chromosome 9"/>
</dbReference>
<dbReference type="Bgee" id="ENSDARG00000025420">
    <property type="expression patterns" value="Expressed in intestine and 25 other cell types or tissues"/>
</dbReference>
<dbReference type="GO" id="GO:0030424">
    <property type="term" value="C:axon"/>
    <property type="evidence" value="ECO:0007669"/>
    <property type="project" value="UniProtKB-SubCell"/>
</dbReference>
<dbReference type="GO" id="GO:0030425">
    <property type="term" value="C:dendrite"/>
    <property type="evidence" value="ECO:0007669"/>
    <property type="project" value="UniProtKB-SubCell"/>
</dbReference>
<dbReference type="GO" id="GO:0000139">
    <property type="term" value="C:Golgi membrane"/>
    <property type="evidence" value="ECO:0007669"/>
    <property type="project" value="UniProtKB-SubCell"/>
</dbReference>
<dbReference type="GO" id="GO:0043204">
    <property type="term" value="C:perikaryon"/>
    <property type="evidence" value="ECO:0007669"/>
    <property type="project" value="UniProtKB-SubCell"/>
</dbReference>
<dbReference type="GO" id="GO:0005886">
    <property type="term" value="C:plasma membrane"/>
    <property type="evidence" value="ECO:0000318"/>
    <property type="project" value="GO_Central"/>
</dbReference>
<dbReference type="GO" id="GO:0045202">
    <property type="term" value="C:synapse"/>
    <property type="evidence" value="ECO:0007669"/>
    <property type="project" value="UniProtKB-SubCell"/>
</dbReference>
<dbReference type="GO" id="GO:0004930">
    <property type="term" value="F:G protein-coupled receptor activity"/>
    <property type="evidence" value="ECO:0007669"/>
    <property type="project" value="UniProtKB-KW"/>
</dbReference>
<dbReference type="GO" id="GO:0008289">
    <property type="term" value="F:lipid binding"/>
    <property type="evidence" value="ECO:0007669"/>
    <property type="project" value="UniProtKB-KW"/>
</dbReference>
<dbReference type="GO" id="GO:0042813">
    <property type="term" value="F:Wnt receptor activity"/>
    <property type="evidence" value="ECO:0000315"/>
    <property type="project" value="ZFIN"/>
</dbReference>
<dbReference type="GO" id="GO:0017147">
    <property type="term" value="F:Wnt-protein binding"/>
    <property type="evidence" value="ECO:0000318"/>
    <property type="project" value="GO_Central"/>
</dbReference>
<dbReference type="GO" id="GO:0043010">
    <property type="term" value="P:camera-type eye development"/>
    <property type="evidence" value="ECO:0000315"/>
    <property type="project" value="ZFIN"/>
</dbReference>
<dbReference type="GO" id="GO:0060070">
    <property type="term" value="P:canonical Wnt signaling pathway"/>
    <property type="evidence" value="ECO:0000318"/>
    <property type="project" value="GO_Central"/>
</dbReference>
<dbReference type="GO" id="GO:0030154">
    <property type="term" value="P:cell differentiation"/>
    <property type="evidence" value="ECO:0007669"/>
    <property type="project" value="UniProtKB-KW"/>
</dbReference>
<dbReference type="GO" id="GO:0001654">
    <property type="term" value="P:eye development"/>
    <property type="evidence" value="ECO:0000315"/>
    <property type="project" value="UniProtKB"/>
</dbReference>
<dbReference type="GO" id="GO:0001889">
    <property type="term" value="P:liver development"/>
    <property type="evidence" value="ECO:0000316"/>
    <property type="project" value="ZFIN"/>
</dbReference>
<dbReference type="GO" id="GO:0090090">
    <property type="term" value="P:negative regulation of canonical Wnt signaling pathway"/>
    <property type="evidence" value="ECO:0000315"/>
    <property type="project" value="ZFIN"/>
</dbReference>
<dbReference type="GO" id="GO:0035567">
    <property type="term" value="P:non-canonical Wnt signaling pathway"/>
    <property type="evidence" value="ECO:0000315"/>
    <property type="project" value="UniProtKB"/>
</dbReference>
<dbReference type="GO" id="GO:0048794">
    <property type="term" value="P:swim bladder development"/>
    <property type="evidence" value="ECO:0000315"/>
    <property type="project" value="ZFIN"/>
</dbReference>
<dbReference type="GO" id="GO:0016055">
    <property type="term" value="P:Wnt signaling pathway"/>
    <property type="evidence" value="ECO:0000315"/>
    <property type="project" value="ZFIN"/>
</dbReference>
<dbReference type="CDD" id="cd15249">
    <property type="entry name" value="7tmF_FZD5"/>
    <property type="match status" value="1"/>
</dbReference>
<dbReference type="CDD" id="cd07456">
    <property type="entry name" value="CRD_FZ5_like"/>
    <property type="match status" value="1"/>
</dbReference>
<dbReference type="FunFam" id="1.10.2000.10:FF:000004">
    <property type="entry name" value="Frizzled class receptor 8a"/>
    <property type="match status" value="1"/>
</dbReference>
<dbReference type="FunFam" id="1.20.1070.10:FF:000053">
    <property type="entry name" value="Frizzled class receptor 8a"/>
    <property type="match status" value="1"/>
</dbReference>
<dbReference type="Gene3D" id="1.10.2000.10">
    <property type="entry name" value="Frizzled cysteine-rich domain"/>
    <property type="match status" value="1"/>
</dbReference>
<dbReference type="Gene3D" id="1.20.1070.10">
    <property type="entry name" value="Rhodopsin 7-helix transmembrane proteins"/>
    <property type="match status" value="1"/>
</dbReference>
<dbReference type="InterPro" id="IPR015526">
    <property type="entry name" value="Frizzled/SFRP"/>
</dbReference>
<dbReference type="InterPro" id="IPR000539">
    <property type="entry name" value="Frizzled/Smoothened_7TM"/>
</dbReference>
<dbReference type="InterPro" id="IPR020067">
    <property type="entry name" value="Frizzled_dom"/>
</dbReference>
<dbReference type="InterPro" id="IPR036790">
    <property type="entry name" value="Frizzled_dom_sf"/>
</dbReference>
<dbReference type="InterPro" id="IPR017981">
    <property type="entry name" value="GPCR_2-like_7TM"/>
</dbReference>
<dbReference type="PANTHER" id="PTHR11309">
    <property type="entry name" value="FRIZZLED"/>
    <property type="match status" value="1"/>
</dbReference>
<dbReference type="PANTHER" id="PTHR11309:SF136">
    <property type="entry name" value="FRIZZLED-5"/>
    <property type="match status" value="1"/>
</dbReference>
<dbReference type="Pfam" id="PF01534">
    <property type="entry name" value="Frizzled"/>
    <property type="match status" value="1"/>
</dbReference>
<dbReference type="Pfam" id="PF01392">
    <property type="entry name" value="Fz"/>
    <property type="match status" value="1"/>
</dbReference>
<dbReference type="PRINTS" id="PR00489">
    <property type="entry name" value="FRIZZLED"/>
</dbReference>
<dbReference type="SMART" id="SM00063">
    <property type="entry name" value="FRI"/>
    <property type="match status" value="1"/>
</dbReference>
<dbReference type="SMART" id="SM01330">
    <property type="entry name" value="Frizzled"/>
    <property type="match status" value="1"/>
</dbReference>
<dbReference type="SUPFAM" id="SSF63501">
    <property type="entry name" value="Frizzled cysteine-rich domain"/>
    <property type="match status" value="1"/>
</dbReference>
<dbReference type="PROSITE" id="PS50038">
    <property type="entry name" value="FZ"/>
    <property type="match status" value="1"/>
</dbReference>
<dbReference type="PROSITE" id="PS50261">
    <property type="entry name" value="G_PROTEIN_RECEP_F2_4"/>
    <property type="match status" value="1"/>
</dbReference>
<reference key="1">
    <citation type="journal article" date="2013" name="Nature">
        <title>The zebrafish reference genome sequence and its relationship to the human genome.</title>
        <authorList>
            <person name="Howe K."/>
            <person name="Clark M.D."/>
            <person name="Torroja C.F."/>
            <person name="Torrance J."/>
            <person name="Berthelot C."/>
            <person name="Muffato M."/>
            <person name="Collins J.E."/>
            <person name="Humphray S."/>
            <person name="McLaren K."/>
            <person name="Matthews L."/>
            <person name="McLaren S."/>
            <person name="Sealy I."/>
            <person name="Caccamo M."/>
            <person name="Churcher C."/>
            <person name="Scott C."/>
            <person name="Barrett J.C."/>
            <person name="Koch R."/>
            <person name="Rauch G.J."/>
            <person name="White S."/>
            <person name="Chow W."/>
            <person name="Kilian B."/>
            <person name="Quintais L.T."/>
            <person name="Guerra-Assuncao J.A."/>
            <person name="Zhou Y."/>
            <person name="Gu Y."/>
            <person name="Yen J."/>
            <person name="Vogel J.H."/>
            <person name="Eyre T."/>
            <person name="Redmond S."/>
            <person name="Banerjee R."/>
            <person name="Chi J."/>
            <person name="Fu B."/>
            <person name="Langley E."/>
            <person name="Maguire S.F."/>
            <person name="Laird G.K."/>
            <person name="Lloyd D."/>
            <person name="Kenyon E."/>
            <person name="Donaldson S."/>
            <person name="Sehra H."/>
            <person name="Almeida-King J."/>
            <person name="Loveland J."/>
            <person name="Trevanion S."/>
            <person name="Jones M."/>
            <person name="Quail M."/>
            <person name="Willey D."/>
            <person name="Hunt A."/>
            <person name="Burton J."/>
            <person name="Sims S."/>
            <person name="McLay K."/>
            <person name="Plumb B."/>
            <person name="Davis J."/>
            <person name="Clee C."/>
            <person name="Oliver K."/>
            <person name="Clark R."/>
            <person name="Riddle C."/>
            <person name="Elliot D."/>
            <person name="Threadgold G."/>
            <person name="Harden G."/>
            <person name="Ware D."/>
            <person name="Begum S."/>
            <person name="Mortimore B."/>
            <person name="Kerry G."/>
            <person name="Heath P."/>
            <person name="Phillimore B."/>
            <person name="Tracey A."/>
            <person name="Corby N."/>
            <person name="Dunn M."/>
            <person name="Johnson C."/>
            <person name="Wood J."/>
            <person name="Clark S."/>
            <person name="Pelan S."/>
            <person name="Griffiths G."/>
            <person name="Smith M."/>
            <person name="Glithero R."/>
            <person name="Howden P."/>
            <person name="Barker N."/>
            <person name="Lloyd C."/>
            <person name="Stevens C."/>
            <person name="Harley J."/>
            <person name="Holt K."/>
            <person name="Panagiotidis G."/>
            <person name="Lovell J."/>
            <person name="Beasley H."/>
            <person name="Henderson C."/>
            <person name="Gordon D."/>
            <person name="Auger K."/>
            <person name="Wright D."/>
            <person name="Collins J."/>
            <person name="Raisen C."/>
            <person name="Dyer L."/>
            <person name="Leung K."/>
            <person name="Robertson L."/>
            <person name="Ambridge K."/>
            <person name="Leongamornlert D."/>
            <person name="McGuire S."/>
            <person name="Gilderthorp R."/>
            <person name="Griffiths C."/>
            <person name="Manthravadi D."/>
            <person name="Nichol S."/>
            <person name="Barker G."/>
            <person name="Whitehead S."/>
            <person name="Kay M."/>
            <person name="Brown J."/>
            <person name="Murnane C."/>
            <person name="Gray E."/>
            <person name="Humphries M."/>
            <person name="Sycamore N."/>
            <person name="Barker D."/>
            <person name="Saunders D."/>
            <person name="Wallis J."/>
            <person name="Babbage A."/>
            <person name="Hammond S."/>
            <person name="Mashreghi-Mohammadi M."/>
            <person name="Barr L."/>
            <person name="Martin S."/>
            <person name="Wray P."/>
            <person name="Ellington A."/>
            <person name="Matthews N."/>
            <person name="Ellwood M."/>
            <person name="Woodmansey R."/>
            <person name="Clark G."/>
            <person name="Cooper J."/>
            <person name="Tromans A."/>
            <person name="Grafham D."/>
            <person name="Skuce C."/>
            <person name="Pandian R."/>
            <person name="Andrews R."/>
            <person name="Harrison E."/>
            <person name="Kimberley A."/>
            <person name="Garnett J."/>
            <person name="Fosker N."/>
            <person name="Hall R."/>
            <person name="Garner P."/>
            <person name="Kelly D."/>
            <person name="Bird C."/>
            <person name="Palmer S."/>
            <person name="Gehring I."/>
            <person name="Berger A."/>
            <person name="Dooley C.M."/>
            <person name="Ersan-Urun Z."/>
            <person name="Eser C."/>
            <person name="Geiger H."/>
            <person name="Geisler M."/>
            <person name="Karotki L."/>
            <person name="Kirn A."/>
            <person name="Konantz J."/>
            <person name="Konantz M."/>
            <person name="Oberlander M."/>
            <person name="Rudolph-Geiger S."/>
            <person name="Teucke M."/>
            <person name="Lanz C."/>
            <person name="Raddatz G."/>
            <person name="Osoegawa K."/>
            <person name="Zhu B."/>
            <person name="Rapp A."/>
            <person name="Widaa S."/>
            <person name="Langford C."/>
            <person name="Yang F."/>
            <person name="Schuster S.C."/>
            <person name="Carter N.P."/>
            <person name="Harrow J."/>
            <person name="Ning Z."/>
            <person name="Herrero J."/>
            <person name="Searle S.M."/>
            <person name="Enright A."/>
            <person name="Geisler R."/>
            <person name="Plasterk R.H."/>
            <person name="Lee C."/>
            <person name="Westerfield M."/>
            <person name="de Jong P.J."/>
            <person name="Zon L.I."/>
            <person name="Postlethwait J.H."/>
            <person name="Nusslein-Volhard C."/>
            <person name="Hubbard T.J."/>
            <person name="Roest Crollius H."/>
            <person name="Rogers J."/>
            <person name="Stemple D.L."/>
        </authorList>
    </citation>
    <scope>NUCLEOTIDE SEQUENCE [LARGE SCALE GENOMIC DNA]</scope>
    <source>
        <strain>Tuebingen</strain>
    </source>
</reference>
<reference key="2">
    <citation type="submission" date="2008-04" db="EMBL/GenBank/DDBJ databases">
        <authorList>
            <consortium name="NIH - Zebrafish Gene Collection (ZGC) project"/>
        </authorList>
    </citation>
    <scope>NUCLEOTIDE SEQUENCE [LARGE SCALE MRNA]</scope>
</reference>
<reference key="3">
    <citation type="journal article" date="2005" name="Neuron">
        <title>Early stages of zebrafish eye formation require the coordinated activity of Wnt11, Fz5, and the Wnt/beta-catenin pathway.</title>
        <authorList>
            <person name="Cavodeassi F."/>
            <person name="Carreira-Barbosa F."/>
            <person name="Young R.M."/>
            <person name="Concha M.L."/>
            <person name="Allende M.L."/>
            <person name="Houart C."/>
            <person name="Tada M."/>
            <person name="Wilson S.W."/>
        </authorList>
    </citation>
    <scope>FUNCTION</scope>
    <scope>DEVELOPMENTAL STAGE</scope>
    <scope>DISRUPTION PHENOTYPE</scope>
</reference>
<reference key="4">
    <citation type="journal article" date="2016" name="Hum. Mol. Genet.">
        <title>A secreted WNT-ligand-binding domain of FZD5 generated by a frameshift mutation causes autosomal dominant coloboma.</title>
        <authorList>
            <person name="Liu C."/>
            <person name="Widen S.A."/>
            <person name="Williamson K.A."/>
            <person name="Ratnapriya R."/>
            <person name="Gerth-Kahlert C."/>
            <person name="Rainger J."/>
            <person name="Alur R.P."/>
            <person name="Strachan E."/>
            <person name="Manjunath S.H."/>
            <person name="Balakrishnan A."/>
            <person name="Floyd J.A."/>
            <person name="Li T."/>
            <person name="Waskiewicz A."/>
            <person name="Brooks B.P."/>
            <person name="Lehmann O.J."/>
            <person name="FitzPatrick D.R."/>
            <person name="Swaroop A."/>
        </authorList>
    </citation>
    <scope>DISRUPTION PHENOTYPE</scope>
</reference>
<reference key="5">
    <citation type="journal article" date="2018" name="Hepatology">
        <title>Wnt/beta-catenin signaling controls intrahepatic biliary network formation in zebrafish by regulating notch activity.</title>
        <authorList>
            <person name="So J."/>
            <person name="Khaliq M."/>
            <person name="Evason K."/>
            <person name="Ninov N."/>
            <person name="Martin B.L."/>
            <person name="Stainier D.Y.R."/>
            <person name="Shin D."/>
        </authorList>
    </citation>
    <scope>DEVELOPMENTAL STAGE</scope>
</reference>
<keyword id="KW-1003">Cell membrane</keyword>
<keyword id="KW-0966">Cell projection</keyword>
<keyword id="KW-0217">Developmental protein</keyword>
<keyword id="KW-0221">Differentiation</keyword>
<keyword id="KW-1015">Disulfide bond</keyword>
<keyword id="KW-0297">G-protein coupled receptor</keyword>
<keyword id="KW-0333">Golgi apparatus</keyword>
<keyword id="KW-0446">Lipid-binding</keyword>
<keyword id="KW-0472">Membrane</keyword>
<keyword id="KW-0675">Receptor</keyword>
<keyword id="KW-1185">Reference proteome</keyword>
<keyword id="KW-0732">Signal</keyword>
<keyword id="KW-0770">Synapse</keyword>
<keyword id="KW-0807">Transducer</keyword>
<keyword id="KW-0812">Transmembrane</keyword>
<keyword id="KW-1133">Transmembrane helix</keyword>
<keyword id="KW-0879">Wnt signaling pathway</keyword>
<accession>B3DIG4</accession>
<accession>B3DIG6</accession>
<accession>F6NK29</accession>
<name>FZD5_DANRE</name>
<gene>
    <name type="primary">fzd5</name>
</gene>